<gene>
    <name type="primary">lysA</name>
    <name type="ordered locus">aq_1208</name>
</gene>
<name>DCDA_AQUAE</name>
<feature type="chain" id="PRO_0000149912" description="Diaminopimelate decarboxylase">
    <location>
        <begin position="1"/>
        <end position="420"/>
    </location>
</feature>
<feature type="active site" description="Proton donor" evidence="2">
    <location>
        <position position="348"/>
    </location>
</feature>
<feature type="binding site" evidence="1">
    <location>
        <position position="244"/>
    </location>
    <ligand>
        <name>pyridoxal 5'-phosphate</name>
        <dbReference type="ChEBI" id="CHEBI:597326"/>
    </ligand>
</feature>
<feature type="binding site" evidence="1">
    <location>
        <begin position="279"/>
        <end position="282"/>
    </location>
    <ligand>
        <name>pyridoxal 5'-phosphate</name>
        <dbReference type="ChEBI" id="CHEBI:597326"/>
    </ligand>
</feature>
<feature type="binding site" evidence="1">
    <location>
        <position position="282"/>
    </location>
    <ligand>
        <name>substrate</name>
    </ligand>
</feature>
<feature type="binding site" evidence="1">
    <location>
        <position position="318"/>
    </location>
    <ligand>
        <name>substrate</name>
    </ligand>
</feature>
<feature type="binding site" evidence="1">
    <location>
        <position position="322"/>
    </location>
    <ligand>
        <name>substrate</name>
    </ligand>
</feature>
<feature type="binding site" evidence="1">
    <location>
        <position position="349"/>
    </location>
    <ligand>
        <name>substrate</name>
    </ligand>
</feature>
<feature type="binding site" evidence="1">
    <location>
        <position position="377"/>
    </location>
    <ligand>
        <name>pyridoxal 5'-phosphate</name>
        <dbReference type="ChEBI" id="CHEBI:597326"/>
    </ligand>
</feature>
<feature type="binding site" evidence="1">
    <location>
        <position position="377"/>
    </location>
    <ligand>
        <name>substrate</name>
    </ligand>
</feature>
<feature type="modified residue" description="N6-(pyridoxal phosphate)lysine" evidence="1">
    <location>
        <position position="65"/>
    </location>
</feature>
<feature type="helix" evidence="5">
    <location>
        <begin position="3"/>
        <end position="7"/>
    </location>
</feature>
<feature type="strand" evidence="5">
    <location>
        <begin position="11"/>
        <end position="14"/>
    </location>
</feature>
<feature type="strand" evidence="5">
    <location>
        <begin position="17"/>
        <end position="20"/>
    </location>
</feature>
<feature type="helix" evidence="5">
    <location>
        <begin position="25"/>
        <end position="32"/>
    </location>
</feature>
<feature type="strand" evidence="5">
    <location>
        <begin position="34"/>
        <end position="40"/>
    </location>
</feature>
<feature type="helix" evidence="5">
    <location>
        <begin position="41"/>
        <end position="54"/>
    </location>
</feature>
<feature type="strand" evidence="5">
    <location>
        <begin position="58"/>
        <end position="63"/>
    </location>
</feature>
<feature type="helix" evidence="5">
    <location>
        <begin position="64"/>
        <end position="66"/>
    </location>
</feature>
<feature type="helix" evidence="5">
    <location>
        <begin position="70"/>
        <end position="78"/>
    </location>
</feature>
<feature type="strand" evidence="5">
    <location>
        <begin position="82"/>
        <end position="87"/>
    </location>
</feature>
<feature type="helix" evidence="5">
    <location>
        <begin position="88"/>
        <end position="96"/>
    </location>
</feature>
<feature type="helix" evidence="5">
    <location>
        <begin position="101"/>
        <end position="103"/>
    </location>
</feature>
<feature type="strand" evidence="5">
    <location>
        <begin position="104"/>
        <end position="106"/>
    </location>
</feature>
<feature type="helix" evidence="5">
    <location>
        <begin position="113"/>
        <end position="121"/>
    </location>
</feature>
<feature type="strand" evidence="5">
    <location>
        <begin position="125"/>
        <end position="129"/>
    </location>
</feature>
<feature type="helix" evidence="5">
    <location>
        <begin position="132"/>
        <end position="145"/>
    </location>
</feature>
<feature type="strand" evidence="5">
    <location>
        <begin position="149"/>
        <end position="156"/>
    </location>
</feature>
<feature type="helix" evidence="5">
    <location>
        <begin position="180"/>
        <end position="182"/>
    </location>
</feature>
<feature type="helix" evidence="5">
    <location>
        <begin position="183"/>
        <end position="191"/>
    </location>
</feature>
<feature type="strand" evidence="5">
    <location>
        <begin position="196"/>
        <end position="202"/>
    </location>
</feature>
<feature type="strand" evidence="5">
    <location>
        <begin position="207"/>
        <end position="211"/>
    </location>
</feature>
<feature type="helix" evidence="5">
    <location>
        <begin position="214"/>
        <end position="231"/>
    </location>
</feature>
<feature type="strand" evidence="5">
    <location>
        <begin position="238"/>
        <end position="240"/>
    </location>
</feature>
<feature type="helix" evidence="5">
    <location>
        <begin position="258"/>
        <end position="265"/>
    </location>
</feature>
<feature type="turn" evidence="5">
    <location>
        <begin position="266"/>
        <end position="268"/>
    </location>
</feature>
<feature type="strand" evidence="5">
    <location>
        <begin position="274"/>
        <end position="278"/>
    </location>
</feature>
<feature type="helix" evidence="5">
    <location>
        <begin position="282"/>
        <end position="285"/>
    </location>
</feature>
<feature type="helix" evidence="5">
    <location>
        <begin position="286"/>
        <end position="288"/>
    </location>
</feature>
<feature type="strand" evidence="5">
    <location>
        <begin position="289"/>
        <end position="301"/>
    </location>
</feature>
<feature type="strand" evidence="5">
    <location>
        <begin position="304"/>
        <end position="310"/>
    </location>
</feature>
<feature type="turn" evidence="5">
    <location>
        <begin position="313"/>
        <end position="315"/>
    </location>
</feature>
<feature type="helix" evidence="5">
    <location>
        <begin position="318"/>
        <end position="322"/>
    </location>
</feature>
<feature type="strand" evidence="5">
    <location>
        <begin position="328"/>
        <end position="332"/>
    </location>
</feature>
<feature type="strand" evidence="5">
    <location>
        <begin position="340"/>
        <end position="344"/>
    </location>
</feature>
<feature type="strand" evidence="5">
    <location>
        <begin position="346"/>
        <end position="349"/>
    </location>
</feature>
<feature type="strand" evidence="5">
    <location>
        <begin position="353"/>
        <end position="359"/>
    </location>
</feature>
<feature type="strand" evidence="5">
    <location>
        <begin position="368"/>
        <end position="371"/>
    </location>
</feature>
<feature type="turn" evidence="5">
    <location>
        <begin position="375"/>
        <end position="378"/>
    </location>
</feature>
<feature type="helix" evidence="5">
    <location>
        <begin position="379"/>
        <end position="381"/>
    </location>
</feature>
<feature type="helix" evidence="5">
    <location>
        <begin position="385"/>
        <end position="387"/>
    </location>
</feature>
<feature type="strand" evidence="5">
    <location>
        <begin position="392"/>
        <end position="397"/>
    </location>
</feature>
<feature type="strand" evidence="5">
    <location>
        <begin position="400"/>
        <end position="405"/>
    </location>
</feature>
<feature type="helix" evidence="5">
    <location>
        <begin position="410"/>
        <end position="414"/>
    </location>
</feature>
<feature type="helix" evidence="5">
    <location>
        <begin position="415"/>
        <end position="417"/>
    </location>
</feature>
<comment type="function">
    <text evidence="1">Specifically catalyzes the decarboxylation of meso-diaminopimelate (meso-DAP) to L-lysine.</text>
</comment>
<comment type="catalytic activity">
    <reaction>
        <text>meso-2,6-diaminopimelate + H(+) = L-lysine + CO2</text>
        <dbReference type="Rhea" id="RHEA:15101"/>
        <dbReference type="ChEBI" id="CHEBI:15378"/>
        <dbReference type="ChEBI" id="CHEBI:16526"/>
        <dbReference type="ChEBI" id="CHEBI:32551"/>
        <dbReference type="ChEBI" id="CHEBI:57791"/>
        <dbReference type="EC" id="4.1.1.20"/>
    </reaction>
</comment>
<comment type="cofactor">
    <cofactor evidence="1">
        <name>pyridoxal 5'-phosphate</name>
        <dbReference type="ChEBI" id="CHEBI:597326"/>
    </cofactor>
</comment>
<comment type="pathway">
    <text>Amino-acid biosynthesis; L-lysine biosynthesis via DAP pathway; L-lysine from DL-2,6-diaminopimelate: step 1/1.</text>
</comment>
<comment type="subunit">
    <text evidence="4">Homodimer.</text>
</comment>
<comment type="similarity">
    <text evidence="3">Belongs to the Orn/Lys/Arg decarboxylase class-II family. LysA subfamily.</text>
</comment>
<evidence type="ECO:0000250" key="1"/>
<evidence type="ECO:0000255" key="2"/>
<evidence type="ECO:0000305" key="3"/>
<evidence type="ECO:0000305" key="4">
    <source ref="2"/>
</evidence>
<evidence type="ECO:0007829" key="5">
    <source>
        <dbReference type="PDB" id="2P3E"/>
    </source>
</evidence>
<accession>O67262</accession>
<dbReference type="EC" id="4.1.1.20"/>
<dbReference type="EMBL" id="AE000657">
    <property type="protein sequence ID" value="AAC07209.1"/>
    <property type="molecule type" value="Genomic_DNA"/>
</dbReference>
<dbReference type="PIR" id="C70404">
    <property type="entry name" value="C70404"/>
</dbReference>
<dbReference type="RefSeq" id="NP_213826.1">
    <property type="nucleotide sequence ID" value="NC_000918.1"/>
</dbReference>
<dbReference type="RefSeq" id="WP_010880764.1">
    <property type="nucleotide sequence ID" value="NC_000918.1"/>
</dbReference>
<dbReference type="PDB" id="2P3E">
    <property type="method" value="X-ray"/>
    <property type="resolution" value="1.99 A"/>
    <property type="chains" value="A/B=1-420"/>
</dbReference>
<dbReference type="PDBsum" id="2P3E"/>
<dbReference type="SMR" id="O67262"/>
<dbReference type="FunCoup" id="O67262">
    <property type="interactions" value="369"/>
</dbReference>
<dbReference type="STRING" id="224324.aq_1208"/>
<dbReference type="EnsemblBacteria" id="AAC07209">
    <property type="protein sequence ID" value="AAC07209"/>
    <property type="gene ID" value="aq_1208"/>
</dbReference>
<dbReference type="KEGG" id="aae:aq_1208"/>
<dbReference type="PATRIC" id="fig|224324.8.peg.940"/>
<dbReference type="eggNOG" id="COG0019">
    <property type="taxonomic scope" value="Bacteria"/>
</dbReference>
<dbReference type="HOGENOM" id="CLU_026444_0_0_0"/>
<dbReference type="InParanoid" id="O67262"/>
<dbReference type="OrthoDB" id="9802241at2"/>
<dbReference type="UniPathway" id="UPA00034">
    <property type="reaction ID" value="UER00027"/>
</dbReference>
<dbReference type="EvolutionaryTrace" id="O67262"/>
<dbReference type="Proteomes" id="UP000000798">
    <property type="component" value="Chromosome"/>
</dbReference>
<dbReference type="GO" id="GO:0008836">
    <property type="term" value="F:diaminopimelate decarboxylase activity"/>
    <property type="evidence" value="ECO:0000318"/>
    <property type="project" value="GO_Central"/>
</dbReference>
<dbReference type="GO" id="GO:0030170">
    <property type="term" value="F:pyridoxal phosphate binding"/>
    <property type="evidence" value="ECO:0007669"/>
    <property type="project" value="UniProtKB-UniRule"/>
</dbReference>
<dbReference type="GO" id="GO:0009089">
    <property type="term" value="P:lysine biosynthetic process via diaminopimelate"/>
    <property type="evidence" value="ECO:0000318"/>
    <property type="project" value="GO_Central"/>
</dbReference>
<dbReference type="CDD" id="cd06828">
    <property type="entry name" value="PLPDE_III_DapDC"/>
    <property type="match status" value="1"/>
</dbReference>
<dbReference type="FunFam" id="2.40.37.10:FF:000003">
    <property type="entry name" value="Diaminopimelate decarboxylase"/>
    <property type="match status" value="1"/>
</dbReference>
<dbReference type="FunFam" id="3.20.20.10:FF:000003">
    <property type="entry name" value="Diaminopimelate decarboxylase"/>
    <property type="match status" value="1"/>
</dbReference>
<dbReference type="Gene3D" id="3.20.20.10">
    <property type="entry name" value="Alanine racemase"/>
    <property type="match status" value="1"/>
</dbReference>
<dbReference type="Gene3D" id="2.40.37.10">
    <property type="entry name" value="Lyase, Ornithine Decarboxylase, Chain A, domain 1"/>
    <property type="match status" value="1"/>
</dbReference>
<dbReference type="HAMAP" id="MF_02120">
    <property type="entry name" value="LysA"/>
    <property type="match status" value="1"/>
</dbReference>
<dbReference type="InterPro" id="IPR009006">
    <property type="entry name" value="Ala_racemase/Decarboxylase_C"/>
</dbReference>
<dbReference type="InterPro" id="IPR002986">
    <property type="entry name" value="DAP_deCOOHase_LysA"/>
</dbReference>
<dbReference type="InterPro" id="IPR022643">
    <property type="entry name" value="De-COase2_C"/>
</dbReference>
<dbReference type="InterPro" id="IPR022657">
    <property type="entry name" value="De-COase2_CS"/>
</dbReference>
<dbReference type="InterPro" id="IPR022644">
    <property type="entry name" value="De-COase2_N"/>
</dbReference>
<dbReference type="InterPro" id="IPR022653">
    <property type="entry name" value="De-COase2_pyr-phos_BS"/>
</dbReference>
<dbReference type="InterPro" id="IPR000183">
    <property type="entry name" value="Orn/DAP/Arg_de-COase"/>
</dbReference>
<dbReference type="InterPro" id="IPR029066">
    <property type="entry name" value="PLP-binding_barrel"/>
</dbReference>
<dbReference type="NCBIfam" id="TIGR01048">
    <property type="entry name" value="lysA"/>
    <property type="match status" value="1"/>
</dbReference>
<dbReference type="PANTHER" id="PTHR43727">
    <property type="entry name" value="DIAMINOPIMELATE DECARBOXYLASE"/>
    <property type="match status" value="1"/>
</dbReference>
<dbReference type="PANTHER" id="PTHR43727:SF2">
    <property type="entry name" value="GROUP IV DECARBOXYLASE"/>
    <property type="match status" value="1"/>
</dbReference>
<dbReference type="Pfam" id="PF02784">
    <property type="entry name" value="Orn_Arg_deC_N"/>
    <property type="match status" value="1"/>
</dbReference>
<dbReference type="Pfam" id="PF00278">
    <property type="entry name" value="Orn_DAP_Arg_deC"/>
    <property type="match status" value="1"/>
</dbReference>
<dbReference type="PRINTS" id="PR01181">
    <property type="entry name" value="DAPDCRBXLASE"/>
</dbReference>
<dbReference type="PRINTS" id="PR01179">
    <property type="entry name" value="ODADCRBXLASE"/>
</dbReference>
<dbReference type="SUPFAM" id="SSF50621">
    <property type="entry name" value="Alanine racemase C-terminal domain-like"/>
    <property type="match status" value="1"/>
</dbReference>
<dbReference type="SUPFAM" id="SSF51419">
    <property type="entry name" value="PLP-binding barrel"/>
    <property type="match status" value="1"/>
</dbReference>
<dbReference type="PROSITE" id="PS00878">
    <property type="entry name" value="ODR_DC_2_1"/>
    <property type="match status" value="1"/>
</dbReference>
<dbReference type="PROSITE" id="PS00879">
    <property type="entry name" value="ODR_DC_2_2"/>
    <property type="match status" value="1"/>
</dbReference>
<protein>
    <recommendedName>
        <fullName>Diaminopimelate decarboxylase</fullName>
        <shortName>DAP decarboxylase</shortName>
        <shortName>DAPDC</shortName>
        <ecNumber>4.1.1.20</ecNumber>
    </recommendedName>
</protein>
<keyword id="KW-0002">3D-structure</keyword>
<keyword id="KW-0028">Amino-acid biosynthesis</keyword>
<keyword id="KW-0210">Decarboxylase</keyword>
<keyword id="KW-0456">Lyase</keyword>
<keyword id="KW-0457">Lysine biosynthesis</keyword>
<keyword id="KW-0663">Pyridoxal phosphate</keyword>
<keyword id="KW-1185">Reference proteome</keyword>
<reference key="1">
    <citation type="journal article" date="1998" name="Nature">
        <title>The complete genome of the hyperthermophilic bacterium Aquifex aeolicus.</title>
        <authorList>
            <person name="Deckert G."/>
            <person name="Warren P.V."/>
            <person name="Gaasterland T."/>
            <person name="Young W.G."/>
            <person name="Lenox A.L."/>
            <person name="Graham D.E."/>
            <person name="Overbeek R."/>
            <person name="Snead M.A."/>
            <person name="Keller M."/>
            <person name="Aujay M."/>
            <person name="Huber R."/>
            <person name="Feldman R.A."/>
            <person name="Short J.M."/>
            <person name="Olsen G.J."/>
            <person name="Swanson R.V."/>
        </authorList>
    </citation>
    <scope>NUCLEOTIDE SEQUENCE [LARGE SCALE GENOMIC DNA]</scope>
    <source>
        <strain>VF5</strain>
    </source>
</reference>
<reference key="2">
    <citation type="submission" date="2009-02" db="PDB data bank">
        <authorList>
            <consortium name="Southeast collaboratory for structural genomics (SECSG)"/>
        </authorList>
    </citation>
    <scope>X-RAY CRYSTALLOGRAPHY (1.99 ANGSTROMS)</scope>
    <scope>SUBUNIT</scope>
</reference>
<proteinExistence type="evidence at protein level"/>
<organism>
    <name type="scientific">Aquifex aeolicus (strain VF5)</name>
    <dbReference type="NCBI Taxonomy" id="224324"/>
    <lineage>
        <taxon>Bacteria</taxon>
        <taxon>Pseudomonadati</taxon>
        <taxon>Aquificota</taxon>
        <taxon>Aquificia</taxon>
        <taxon>Aquificales</taxon>
        <taxon>Aquificaceae</taxon>
        <taxon>Aquifex</taxon>
    </lineage>
</organism>
<sequence>MELLKEYNPYLEYRDGELFIEGVSLKELAQTFGTPLYVYSSNFIKERFEAYRKAFPDALICYAVKANFNPHLVKLLGELGAGADIVSGGELYLAKKAGIPPERIVYAGVGKTEKELTDAVDSEILMFNVESRQELDVLNEIAGKLGKKARIAIRVNPDVDPKTHPYIATGMQKSKFGVDIREAQKEYEYASKLENLEIVGIHCHIGSQILDISPYREAVEKVVSLYESLTQKGFDIKYLDIGGGLGIKYKPEDKEPAPQDLADLLKDLLENVKAKIILEPGRSIMGNAGILITQVQFLKDKGSKHFIIVDAGMNDLIRPSIYNAYHHIIPVETKERKKVVADIVGPICETGDFLALDREIEEVQRGEYLAVLSAGAYGFAMSSHYNMRPRAAEVLVENGSVKLIRKRENYDYIVEPSLDI</sequence>